<gene>
    <name evidence="1" type="primary">psmB1</name>
    <name type="ordered locus">Tneu_0052</name>
</gene>
<feature type="propeptide" id="PRO_0000397482" description="Removed in mature form; by autocatalysis" evidence="1">
    <location>
        <position position="1"/>
    </location>
</feature>
<feature type="chain" id="PRO_0000397483" description="Proteasome subunit beta 1">
    <location>
        <begin position="2"/>
        <end position="201"/>
    </location>
</feature>
<feature type="active site" description="Nucleophile" evidence="1">
    <location>
        <position position="2"/>
    </location>
</feature>
<proteinExistence type="inferred from homology"/>
<keyword id="KW-0068">Autocatalytic cleavage</keyword>
<keyword id="KW-0963">Cytoplasm</keyword>
<keyword id="KW-0378">Hydrolase</keyword>
<keyword id="KW-0645">Protease</keyword>
<keyword id="KW-0647">Proteasome</keyword>
<keyword id="KW-0888">Threonine protease</keyword>
<keyword id="KW-0865">Zymogen</keyword>
<dbReference type="EC" id="3.4.25.1" evidence="1"/>
<dbReference type="EMBL" id="CP001014">
    <property type="protein sequence ID" value="ACB39010.1"/>
    <property type="molecule type" value="Genomic_DNA"/>
</dbReference>
<dbReference type="RefSeq" id="WP_012349431.1">
    <property type="nucleotide sequence ID" value="NC_010525.1"/>
</dbReference>
<dbReference type="SMR" id="B1YA36"/>
<dbReference type="STRING" id="444157.Tneu_0052"/>
<dbReference type="MEROPS" id="T01.002"/>
<dbReference type="GeneID" id="6164696"/>
<dbReference type="KEGG" id="tne:Tneu_0052"/>
<dbReference type="eggNOG" id="arCOG00970">
    <property type="taxonomic scope" value="Archaea"/>
</dbReference>
<dbReference type="HOGENOM" id="CLU_035750_7_2_2"/>
<dbReference type="OrthoDB" id="6330at2157"/>
<dbReference type="Proteomes" id="UP000001694">
    <property type="component" value="Chromosome"/>
</dbReference>
<dbReference type="GO" id="GO:0005737">
    <property type="term" value="C:cytoplasm"/>
    <property type="evidence" value="ECO:0007669"/>
    <property type="project" value="UniProtKB-SubCell"/>
</dbReference>
<dbReference type="GO" id="GO:0019774">
    <property type="term" value="C:proteasome core complex, beta-subunit complex"/>
    <property type="evidence" value="ECO:0007669"/>
    <property type="project" value="UniProtKB-UniRule"/>
</dbReference>
<dbReference type="GO" id="GO:0004298">
    <property type="term" value="F:threonine-type endopeptidase activity"/>
    <property type="evidence" value="ECO:0007669"/>
    <property type="project" value="UniProtKB-UniRule"/>
</dbReference>
<dbReference type="GO" id="GO:0010498">
    <property type="term" value="P:proteasomal protein catabolic process"/>
    <property type="evidence" value="ECO:0007669"/>
    <property type="project" value="UniProtKB-UniRule"/>
</dbReference>
<dbReference type="FunFam" id="3.60.20.10:FF:000049">
    <property type="entry name" value="Proteasome subunit beta"/>
    <property type="match status" value="1"/>
</dbReference>
<dbReference type="Gene3D" id="3.60.20.10">
    <property type="entry name" value="Glutamine Phosphoribosylpyrophosphate, subunit 1, domain 1"/>
    <property type="match status" value="1"/>
</dbReference>
<dbReference type="HAMAP" id="MF_02113_A">
    <property type="entry name" value="Proteasome_B_A"/>
    <property type="match status" value="1"/>
</dbReference>
<dbReference type="InterPro" id="IPR029055">
    <property type="entry name" value="Ntn_hydrolases_N"/>
</dbReference>
<dbReference type="InterPro" id="IPR019983">
    <property type="entry name" value="Pept_T1A_Psome_bsu_arc"/>
</dbReference>
<dbReference type="InterPro" id="IPR000243">
    <property type="entry name" value="Pept_T1A_subB"/>
</dbReference>
<dbReference type="InterPro" id="IPR016050">
    <property type="entry name" value="Proteasome_bsu_CS"/>
</dbReference>
<dbReference type="InterPro" id="IPR001353">
    <property type="entry name" value="Proteasome_sua/b"/>
</dbReference>
<dbReference type="InterPro" id="IPR023333">
    <property type="entry name" value="Proteasome_suB-type"/>
</dbReference>
<dbReference type="PANTHER" id="PTHR32194:SF0">
    <property type="entry name" value="ATP-DEPENDENT PROTEASE SUBUNIT HSLV"/>
    <property type="match status" value="1"/>
</dbReference>
<dbReference type="PANTHER" id="PTHR32194">
    <property type="entry name" value="METALLOPROTEASE TLDD"/>
    <property type="match status" value="1"/>
</dbReference>
<dbReference type="Pfam" id="PF00227">
    <property type="entry name" value="Proteasome"/>
    <property type="match status" value="1"/>
</dbReference>
<dbReference type="PRINTS" id="PR00141">
    <property type="entry name" value="PROTEASOME"/>
</dbReference>
<dbReference type="SUPFAM" id="SSF56235">
    <property type="entry name" value="N-terminal nucleophile aminohydrolases (Ntn hydrolases)"/>
    <property type="match status" value="1"/>
</dbReference>
<dbReference type="PROSITE" id="PS00854">
    <property type="entry name" value="PROTEASOME_BETA_1"/>
    <property type="match status" value="1"/>
</dbReference>
<dbReference type="PROSITE" id="PS51476">
    <property type="entry name" value="PROTEASOME_BETA_2"/>
    <property type="match status" value="1"/>
</dbReference>
<accession>B1YA36</accession>
<name>PSB1_PYRNV</name>
<sequence>MTTTVGIAVREGVVLATDKRVTAGYYIAHKQGEKIWKIDDHVAATMSGGVADLQSVLSFLTLRAREYKMEYKRPIPIRALVNYVSLILFYSRPYIYIVHSIIGGVDDEEGAVLYMADWLGTVTKERYIATGSGSPYAKGALEVGYREDMSLEDAVDLAIKAVKAAIRNDPGSGEGIDVVVITKREGFRRVFTAQQKIVLAE</sequence>
<organism>
    <name type="scientific">Pyrobaculum neutrophilum (strain DSM 2338 / JCM 9278 / NBRC 100436 / V24Sta)</name>
    <name type="common">Thermoproteus neutrophilus</name>
    <dbReference type="NCBI Taxonomy" id="444157"/>
    <lineage>
        <taxon>Archaea</taxon>
        <taxon>Thermoproteota</taxon>
        <taxon>Thermoprotei</taxon>
        <taxon>Thermoproteales</taxon>
        <taxon>Thermoproteaceae</taxon>
        <taxon>Pyrobaculum</taxon>
    </lineage>
</organism>
<evidence type="ECO:0000255" key="1">
    <source>
        <dbReference type="HAMAP-Rule" id="MF_02113"/>
    </source>
</evidence>
<comment type="function">
    <text evidence="1">Component of the proteasome core, a large protease complex with broad specificity involved in protein degradation.</text>
</comment>
<comment type="catalytic activity">
    <reaction evidence="1">
        <text>Cleavage of peptide bonds with very broad specificity.</text>
        <dbReference type="EC" id="3.4.25.1"/>
    </reaction>
</comment>
<comment type="activity regulation">
    <text evidence="1">The formation of the proteasomal ATPase PAN-20S proteasome complex, via the docking of the C-termini of PAN into the intersubunit pockets in the alpha-rings, triggers opening of the gate for substrate entry. Interconversion between the open-gate and close-gate conformations leads to a dynamic regulation of the 20S proteasome proteolysis activity.</text>
</comment>
<comment type="subunit">
    <text evidence="1">The 20S proteasome core is composed of 14 alpha and 14 beta subunits that assemble into four stacked heptameric rings, resulting in a barrel-shaped structure. The two inner rings, each composed of seven catalytic beta subunits, are sandwiched by two outer rings, each composed of seven alpha subunits. The catalytic chamber with the active sites is on the inside of the barrel. Has a gated structure, the ends of the cylinder being occluded by the N-termini of the alpha-subunits. Is capped at one or both ends by the proteasome regulatory ATPase, PAN.</text>
</comment>
<comment type="subcellular location">
    <subcellularLocation>
        <location evidence="1">Cytoplasm</location>
    </subcellularLocation>
</comment>
<comment type="similarity">
    <text evidence="1">Belongs to the peptidase T1B family.</text>
</comment>
<protein>
    <recommendedName>
        <fullName evidence="1">Proteasome subunit beta 1</fullName>
        <ecNumber evidence="1">3.4.25.1</ecNumber>
    </recommendedName>
    <alternativeName>
        <fullName evidence="1">20S proteasome beta subunit 1</fullName>
    </alternativeName>
    <alternativeName>
        <fullName evidence="1">Proteasome core protein PsmB 1</fullName>
    </alternativeName>
</protein>
<reference key="1">
    <citation type="submission" date="2008-03" db="EMBL/GenBank/DDBJ databases">
        <title>Complete sequence of Thermoproteus neutrophilus V24Sta.</title>
        <authorList>
            <consortium name="US DOE Joint Genome Institute"/>
            <person name="Copeland A."/>
            <person name="Lucas S."/>
            <person name="Lapidus A."/>
            <person name="Glavina del Rio T."/>
            <person name="Dalin E."/>
            <person name="Tice H."/>
            <person name="Bruce D."/>
            <person name="Goodwin L."/>
            <person name="Pitluck S."/>
            <person name="Sims D."/>
            <person name="Brettin T."/>
            <person name="Detter J.C."/>
            <person name="Han C."/>
            <person name="Kuske C.R."/>
            <person name="Schmutz J."/>
            <person name="Larimer F."/>
            <person name="Land M."/>
            <person name="Hauser L."/>
            <person name="Kyrpides N."/>
            <person name="Mikhailova N."/>
            <person name="Biddle J.F."/>
            <person name="Zhang Z."/>
            <person name="Fitz-Gibbon S.T."/>
            <person name="Lowe T.M."/>
            <person name="Saltikov C."/>
            <person name="House C.H."/>
            <person name="Richardson P."/>
        </authorList>
    </citation>
    <scope>NUCLEOTIDE SEQUENCE [LARGE SCALE GENOMIC DNA]</scope>
    <source>
        <strain>DSM 2338 / JCM 9278 / NBRC 100436 / V24Sta</strain>
    </source>
</reference>